<reference key="1">
    <citation type="journal article" date="1997" name="J. Bacteriol.">
        <title>Complete genome sequence of Methanobacterium thermoautotrophicum deltaH: functional analysis and comparative genomics.</title>
        <authorList>
            <person name="Smith D.R."/>
            <person name="Doucette-Stamm L.A."/>
            <person name="Deloughery C."/>
            <person name="Lee H.-M."/>
            <person name="Dubois J."/>
            <person name="Aldredge T."/>
            <person name="Bashirzadeh R."/>
            <person name="Blakely D."/>
            <person name="Cook R."/>
            <person name="Gilbert K."/>
            <person name="Harrison D."/>
            <person name="Hoang L."/>
            <person name="Keagle P."/>
            <person name="Lumm W."/>
            <person name="Pothier B."/>
            <person name="Qiu D."/>
            <person name="Spadafora R."/>
            <person name="Vicare R."/>
            <person name="Wang Y."/>
            <person name="Wierzbowski J."/>
            <person name="Gibson R."/>
            <person name="Jiwani N."/>
            <person name="Caruso A."/>
            <person name="Bush D."/>
            <person name="Safer H."/>
            <person name="Patwell D."/>
            <person name="Prabhakar S."/>
            <person name="McDougall S."/>
            <person name="Shimer G."/>
            <person name="Goyal A."/>
            <person name="Pietrovski S."/>
            <person name="Church G.M."/>
            <person name="Daniels C.J."/>
            <person name="Mao J.-I."/>
            <person name="Rice P."/>
            <person name="Noelling J."/>
            <person name="Reeve J.N."/>
        </authorList>
    </citation>
    <scope>NUCLEOTIDE SEQUENCE [LARGE SCALE GENOMIC DNA]</scope>
    <source>
        <strain>ATCC 29096 / DSM 1053 / JCM 10044 / NBRC 100330 / Delta H</strain>
    </source>
</reference>
<reference key="2">
    <citation type="journal article" date="2001" name="J. Bacteriol.">
        <title>Autophosphorylation of archaeal Cdc6 homologues is regulated by DNA.</title>
        <authorList>
            <person name="Grabowski B."/>
            <person name="Kelman Z."/>
        </authorList>
    </citation>
    <scope>PHOSPHORYLATION</scope>
    <scope>MUTAGENESIS OF LYS-71 AND ASP-148</scope>
</reference>
<reference key="3">
    <citation type="journal article" date="2004" name="Nucleic Acids Res.">
        <title>Biochemical characterization of Cdc6/Orc1 binding to the replication origin of the euryarchaeon Methanothermobacter thermoautotrophicus.</title>
        <authorList>
            <person name="Capaldi S.A."/>
            <person name="Berger J.M."/>
        </authorList>
    </citation>
    <scope>FUNCTION</scope>
    <scope>DNA-BINDING</scope>
</reference>
<reference key="4">
    <citation type="journal article" date="2005" name="Nucleic Acids Res.">
        <title>Interactions between the archaeal Cdc6 and MCM proteins modulate their biochemical properties.</title>
        <authorList>
            <person name="Kasiviswanathan R."/>
            <person name="Shin J.H."/>
            <person name="Kelman Z."/>
        </authorList>
    </citation>
    <scope>FUNCTION</scope>
    <scope>DNA-BINDING</scope>
    <scope>INTERACTION WITH MCM</scope>
    <scope>PHOSPHORYLATION</scope>
</reference>
<reference key="5">
    <citation type="journal article" date="2006" name="J. Bacteriol.">
        <title>DNA binding by the Methanothermobacter thermautotrophicus Cdc6 protein is inhibited by the minichromosome maintenance helicase.</title>
        <authorList>
            <person name="Kasiviswanathan R."/>
            <person name="Shin J.H."/>
            <person name="Kelman Z."/>
        </authorList>
    </citation>
    <scope>FUNCTION</scope>
    <scope>DNA-BINDING</scope>
    <scope>INTERACTION WITH MCM</scope>
    <scope>DOMAIN</scope>
</reference>
<reference key="6">
    <citation type="journal article" date="2008" name="J. Bacteriol.">
        <title>The Methanothermobacter thermautotrophicus Cdc6-2 protein, the putative helicase loader, dissociates the minichromosome maintenance helicase.</title>
        <authorList>
            <person name="Shin J.H."/>
            <person name="Heo G.Y."/>
            <person name="Kelman Z."/>
        </authorList>
    </citation>
    <scope>FUNCTION</scope>
</reference>
<gene>
    <name type="primary">cdc6-2</name>
    <name type="ordered locus">MTH_1599</name>
</gene>
<name>CDC62_METTH</name>
<comment type="function">
    <text evidence="1 3 4 5 6">Involved in regulation of DNA replication. Dissociates the MCM complex and inhibits the MCM helicase activity, suggesting that it may function as a helicase loader. Binds to both specific and random double-stranded or single-stranded DNA.</text>
</comment>
<comment type="subunit">
    <text evidence="4 5">Interacts with MCM.</text>
</comment>
<comment type="domain">
    <text evidence="5">The N-terminal AAA+ ATPase domain and the C-terminal winged-helix (WH) domain are both required for DNA binding.</text>
</comment>
<comment type="PTM">
    <text evidence="2 4">Autophosphorylated on a serine. Phosphorylation is inhibited by binding to MCM. Both single-stranded DNA and double-stranded DNA inhibit the phosphorylation reaction.</text>
</comment>
<comment type="similarity">
    <text evidence="1">Belongs to the CDC6/cdc18 family.</text>
</comment>
<dbReference type="EMBL" id="AE000666">
    <property type="protein sequence ID" value="AAB86072.1"/>
    <property type="molecule type" value="Genomic_DNA"/>
</dbReference>
<dbReference type="PIR" id="D69080">
    <property type="entry name" value="D69080"/>
</dbReference>
<dbReference type="RefSeq" id="WP_010877207.1">
    <property type="nucleotide sequence ID" value="NC_000916.1"/>
</dbReference>
<dbReference type="SMR" id="O27636"/>
<dbReference type="STRING" id="187420.MTH_1599"/>
<dbReference type="PaxDb" id="187420-MTH_1599"/>
<dbReference type="EnsemblBacteria" id="AAB86072">
    <property type="protein sequence ID" value="AAB86072"/>
    <property type="gene ID" value="MTH_1599"/>
</dbReference>
<dbReference type="GeneID" id="77403996"/>
<dbReference type="KEGG" id="mth:MTH_1599"/>
<dbReference type="PATRIC" id="fig|187420.15.peg.1563"/>
<dbReference type="HOGENOM" id="CLU_025112_3_0_2"/>
<dbReference type="InParanoid" id="O27636"/>
<dbReference type="Proteomes" id="UP000005223">
    <property type="component" value="Chromosome"/>
</dbReference>
<dbReference type="GO" id="GO:0005524">
    <property type="term" value="F:ATP binding"/>
    <property type="evidence" value="ECO:0007669"/>
    <property type="project" value="UniProtKB-UniRule"/>
</dbReference>
<dbReference type="GO" id="GO:0016887">
    <property type="term" value="F:ATP hydrolysis activity"/>
    <property type="evidence" value="ECO:0007669"/>
    <property type="project" value="InterPro"/>
</dbReference>
<dbReference type="GO" id="GO:0003677">
    <property type="term" value="F:DNA binding"/>
    <property type="evidence" value="ECO:0007669"/>
    <property type="project" value="UniProtKB-KW"/>
</dbReference>
<dbReference type="GO" id="GO:0006260">
    <property type="term" value="P:DNA replication"/>
    <property type="evidence" value="ECO:0007669"/>
    <property type="project" value="UniProtKB-UniRule"/>
</dbReference>
<dbReference type="Gene3D" id="1.10.8.60">
    <property type="match status" value="1"/>
</dbReference>
<dbReference type="Gene3D" id="3.40.50.300">
    <property type="entry name" value="P-loop containing nucleotide triphosphate hydrolases"/>
    <property type="match status" value="1"/>
</dbReference>
<dbReference type="HAMAP" id="MF_01407">
    <property type="entry name" value="ORC1_type_DNA_replic_protein"/>
    <property type="match status" value="1"/>
</dbReference>
<dbReference type="InterPro" id="IPR049945">
    <property type="entry name" value="AAA_22"/>
</dbReference>
<dbReference type="InterPro" id="IPR015163">
    <property type="entry name" value="Cdc6_C"/>
</dbReference>
<dbReference type="InterPro" id="IPR055237">
    <property type="entry name" value="Cdc6_lid"/>
</dbReference>
<dbReference type="InterPro" id="IPR050311">
    <property type="entry name" value="ORC1/CDC6"/>
</dbReference>
<dbReference type="InterPro" id="IPR014277">
    <property type="entry name" value="Orc1/Cdc6_arc"/>
</dbReference>
<dbReference type="InterPro" id="IPR027417">
    <property type="entry name" value="P-loop_NTPase"/>
</dbReference>
<dbReference type="InterPro" id="IPR036390">
    <property type="entry name" value="WH_DNA-bd_sf"/>
</dbReference>
<dbReference type="NCBIfam" id="TIGR02928">
    <property type="entry name" value="orc1/cdc6 family replication initiation protein"/>
    <property type="match status" value="1"/>
</dbReference>
<dbReference type="NCBIfam" id="NF001624">
    <property type="entry name" value="PRK00411.1-2"/>
    <property type="match status" value="1"/>
</dbReference>
<dbReference type="PANTHER" id="PTHR10763:SF26">
    <property type="entry name" value="CELL DIVISION CONTROL PROTEIN 6 HOMOLOG"/>
    <property type="match status" value="1"/>
</dbReference>
<dbReference type="PANTHER" id="PTHR10763">
    <property type="entry name" value="CELL DIVISION CONTROL PROTEIN 6-RELATED"/>
    <property type="match status" value="1"/>
</dbReference>
<dbReference type="Pfam" id="PF13401">
    <property type="entry name" value="AAA_22"/>
    <property type="match status" value="1"/>
</dbReference>
<dbReference type="Pfam" id="PF22703">
    <property type="entry name" value="Cdc6_lid"/>
    <property type="match status" value="1"/>
</dbReference>
<dbReference type="SMART" id="SM01074">
    <property type="entry name" value="Cdc6_C"/>
    <property type="match status" value="1"/>
</dbReference>
<dbReference type="SUPFAM" id="SSF52540">
    <property type="entry name" value="P-loop containing nucleoside triphosphate hydrolases"/>
    <property type="match status" value="1"/>
</dbReference>
<dbReference type="SUPFAM" id="SSF46785">
    <property type="entry name" value="Winged helix' DNA-binding domain"/>
    <property type="match status" value="1"/>
</dbReference>
<accession>O27636</accession>
<proteinExistence type="evidence at protein level"/>
<evidence type="ECO:0000255" key="1">
    <source>
        <dbReference type="HAMAP-Rule" id="MF_01407"/>
    </source>
</evidence>
<evidence type="ECO:0000269" key="2">
    <source>
    </source>
</evidence>
<evidence type="ECO:0000269" key="3">
    <source>
    </source>
</evidence>
<evidence type="ECO:0000269" key="4">
    <source>
    </source>
</evidence>
<evidence type="ECO:0000269" key="5">
    <source>
    </source>
</evidence>
<evidence type="ECO:0000269" key="6">
    <source>
    </source>
</evidence>
<protein>
    <recommendedName>
        <fullName evidence="1">ORC1-type DNA replication protein 2</fullName>
    </recommendedName>
</protein>
<keyword id="KW-0067">ATP-binding</keyword>
<keyword id="KW-0235">DNA replication</keyword>
<keyword id="KW-0238">DNA-binding</keyword>
<keyword id="KW-0547">Nucleotide-binding</keyword>
<keyword id="KW-1185">Reference proteome</keyword>
<sequence length="379" mass="43302">MKGDKRRDIRDILLHDETLFRNMNAFDPDYVPENYRYRESQMEALAVCIRPALRNGRPVNAVILGSCATGKTTAIKKIFEMVESTSEGVVCCYINCQLHTTRFGIFSQIYSKIFGHQPPETGVPFSRIYQTIMQHLASEKRALVVALDDINHLFYSKNANKVLYDILRAHEVFEGVRTGVFAVLSDIEFRYALDKNVDSIFIPQEIVFPPYTREEVFNILRDRVRVGFYPGVISDELLERITDHTMDTGDLRYGIDLLRVCGNLAEADASPVIGEEHLERALKSTGPVNLIHTVRTLNENEREFLRILADAGEDMTAGALYELFRESTGSSYSSFNRIIEKLEFLRLIDTRLTGKGVRGNSRILIPRFSREDLRRCPGF</sequence>
<organism>
    <name type="scientific">Methanothermobacter thermautotrophicus (strain ATCC 29096 / DSM 1053 / JCM 10044 / NBRC 100330 / Delta H)</name>
    <name type="common">Methanobacterium thermoautotrophicum</name>
    <dbReference type="NCBI Taxonomy" id="187420"/>
    <lineage>
        <taxon>Archaea</taxon>
        <taxon>Methanobacteriati</taxon>
        <taxon>Methanobacteriota</taxon>
        <taxon>Methanomada group</taxon>
        <taxon>Methanobacteria</taxon>
        <taxon>Methanobacteriales</taxon>
        <taxon>Methanobacteriaceae</taxon>
        <taxon>Methanothermobacter</taxon>
    </lineage>
</organism>
<feature type="chain" id="PRO_0000151009" description="ORC1-type DNA replication protein 2">
    <location>
        <begin position="1"/>
        <end position="379"/>
    </location>
</feature>
<feature type="binding site" evidence="1">
    <location>
        <begin position="69"/>
        <end position="73"/>
    </location>
    <ligand>
        <name>ATP</name>
        <dbReference type="ChEBI" id="CHEBI:30616"/>
    </ligand>
</feature>
<feature type="binding site" evidence="1">
    <location>
        <position position="211"/>
    </location>
    <ligand>
        <name>ATP</name>
        <dbReference type="ChEBI" id="CHEBI:30616"/>
    </ligand>
</feature>
<feature type="binding site" evidence="1">
    <location>
        <position position="223"/>
    </location>
    <ligand>
        <name>ATP</name>
        <dbReference type="ChEBI" id="CHEBI:30616"/>
    </ligand>
</feature>
<feature type="mutagenesis site" description="No labeling with ATP." evidence="2">
    <original>K</original>
    <variation>E</variation>
    <location>
        <position position="71"/>
    </location>
</feature>
<feature type="mutagenesis site" description="Retains some ability to be labeled." evidence="2">
    <original>D</original>
    <variation>N</variation>
    <location>
        <position position="148"/>
    </location>
</feature>
<feature type="mutagenesis site" description="Decrease in dsDNA binding and strong decrease in ssDNA binding.">
    <original>R</original>
    <variation>A</variation>
    <location>
        <position position="337"/>
    </location>
</feature>